<feature type="chain" id="PRO_1000017502" description="Large ribosomal subunit protein bL27">
    <location>
        <begin position="1"/>
        <end position="85"/>
    </location>
</feature>
<feature type="region of interest" description="Disordered" evidence="2">
    <location>
        <begin position="1"/>
        <end position="20"/>
    </location>
</feature>
<name>RL27_KLEP7</name>
<protein>
    <recommendedName>
        <fullName evidence="1">Large ribosomal subunit protein bL27</fullName>
    </recommendedName>
    <alternativeName>
        <fullName evidence="3">50S ribosomal protein L27</fullName>
    </alternativeName>
</protein>
<keyword id="KW-0687">Ribonucleoprotein</keyword>
<keyword id="KW-0689">Ribosomal protein</keyword>
<reference key="1">
    <citation type="submission" date="2006-09" db="EMBL/GenBank/DDBJ databases">
        <authorList>
            <consortium name="The Klebsiella pneumonia Genome Sequencing Project"/>
            <person name="McClelland M."/>
            <person name="Sanderson E.K."/>
            <person name="Spieth J."/>
            <person name="Clifton W.S."/>
            <person name="Latreille P."/>
            <person name="Sabo A."/>
            <person name="Pepin K."/>
            <person name="Bhonagiri V."/>
            <person name="Porwollik S."/>
            <person name="Ali J."/>
            <person name="Wilson R.K."/>
        </authorList>
    </citation>
    <scope>NUCLEOTIDE SEQUENCE [LARGE SCALE GENOMIC DNA]</scope>
    <source>
        <strain>ATCC 700721 / MGH 78578</strain>
    </source>
</reference>
<comment type="similarity">
    <text evidence="1">Belongs to the bacterial ribosomal protein bL27 family.</text>
</comment>
<organism>
    <name type="scientific">Klebsiella pneumoniae subsp. pneumoniae (strain ATCC 700721 / MGH 78578)</name>
    <dbReference type="NCBI Taxonomy" id="272620"/>
    <lineage>
        <taxon>Bacteria</taxon>
        <taxon>Pseudomonadati</taxon>
        <taxon>Pseudomonadota</taxon>
        <taxon>Gammaproteobacteria</taxon>
        <taxon>Enterobacterales</taxon>
        <taxon>Enterobacteriaceae</taxon>
        <taxon>Klebsiella/Raoultella group</taxon>
        <taxon>Klebsiella</taxon>
        <taxon>Klebsiella pneumoniae complex</taxon>
    </lineage>
</organism>
<proteinExistence type="inferred from homology"/>
<evidence type="ECO:0000255" key="1">
    <source>
        <dbReference type="HAMAP-Rule" id="MF_00539"/>
    </source>
</evidence>
<evidence type="ECO:0000256" key="2">
    <source>
        <dbReference type="SAM" id="MobiDB-lite"/>
    </source>
</evidence>
<evidence type="ECO:0000305" key="3"/>
<accession>A6TEK4</accession>
<gene>
    <name evidence="1" type="primary">rpmA</name>
    <name type="ordered locus">KPN78578_35640</name>
    <name type="ORF">KPN_03595</name>
</gene>
<dbReference type="EMBL" id="CP000647">
    <property type="protein sequence ID" value="ABR78988.1"/>
    <property type="molecule type" value="Genomic_DNA"/>
</dbReference>
<dbReference type="RefSeq" id="WP_002434222.1">
    <property type="nucleotide sequence ID" value="NC_009648.1"/>
</dbReference>
<dbReference type="SMR" id="A6TEK4"/>
<dbReference type="STRING" id="272620.KPN_03595"/>
<dbReference type="jPOST" id="A6TEK4"/>
<dbReference type="PaxDb" id="272620-KPN_03595"/>
<dbReference type="EnsemblBacteria" id="ABR78988">
    <property type="protein sequence ID" value="ABR78988"/>
    <property type="gene ID" value="KPN_03595"/>
</dbReference>
<dbReference type="GeneID" id="93314000"/>
<dbReference type="KEGG" id="kpn:KPN_03595"/>
<dbReference type="HOGENOM" id="CLU_095424_4_1_6"/>
<dbReference type="Proteomes" id="UP000000265">
    <property type="component" value="Chromosome"/>
</dbReference>
<dbReference type="GO" id="GO:0022625">
    <property type="term" value="C:cytosolic large ribosomal subunit"/>
    <property type="evidence" value="ECO:0007669"/>
    <property type="project" value="TreeGrafter"/>
</dbReference>
<dbReference type="GO" id="GO:0003735">
    <property type="term" value="F:structural constituent of ribosome"/>
    <property type="evidence" value="ECO:0007669"/>
    <property type="project" value="InterPro"/>
</dbReference>
<dbReference type="GO" id="GO:0006412">
    <property type="term" value="P:translation"/>
    <property type="evidence" value="ECO:0007669"/>
    <property type="project" value="UniProtKB-UniRule"/>
</dbReference>
<dbReference type="FunFam" id="2.40.50.100:FF:000001">
    <property type="entry name" value="50S ribosomal protein L27"/>
    <property type="match status" value="1"/>
</dbReference>
<dbReference type="Gene3D" id="2.40.50.100">
    <property type="match status" value="1"/>
</dbReference>
<dbReference type="HAMAP" id="MF_00539">
    <property type="entry name" value="Ribosomal_bL27"/>
    <property type="match status" value="1"/>
</dbReference>
<dbReference type="InterPro" id="IPR001684">
    <property type="entry name" value="Ribosomal_bL27"/>
</dbReference>
<dbReference type="InterPro" id="IPR018261">
    <property type="entry name" value="Ribosomal_bL27_CS"/>
</dbReference>
<dbReference type="NCBIfam" id="TIGR00062">
    <property type="entry name" value="L27"/>
    <property type="match status" value="1"/>
</dbReference>
<dbReference type="PANTHER" id="PTHR15893:SF0">
    <property type="entry name" value="LARGE RIBOSOMAL SUBUNIT PROTEIN BL27M"/>
    <property type="match status" value="1"/>
</dbReference>
<dbReference type="PANTHER" id="PTHR15893">
    <property type="entry name" value="RIBOSOMAL PROTEIN L27"/>
    <property type="match status" value="1"/>
</dbReference>
<dbReference type="Pfam" id="PF01016">
    <property type="entry name" value="Ribosomal_L27"/>
    <property type="match status" value="1"/>
</dbReference>
<dbReference type="PRINTS" id="PR00063">
    <property type="entry name" value="RIBOSOMALL27"/>
</dbReference>
<dbReference type="SUPFAM" id="SSF110324">
    <property type="entry name" value="Ribosomal L27 protein-like"/>
    <property type="match status" value="1"/>
</dbReference>
<dbReference type="PROSITE" id="PS00831">
    <property type="entry name" value="RIBOSOMAL_L27"/>
    <property type="match status" value="1"/>
</dbReference>
<sequence length="85" mass="9124">MAHKKAGGSTRNGRDSEAKRLGVKRFGGEAVLAGSIIVRQRGTKFHAGTNVGCGRDHTLFALTDGKVKFEVKGPKNRKFISIVAE</sequence>